<comment type="function">
    <text evidence="1">Catalyzes the transfer of an acetyl group from acetyl-CoA to tetrahydrodipicolinate.</text>
</comment>
<comment type="catalytic activity">
    <reaction evidence="1">
        <text>(S)-2,3,4,5-tetrahydrodipicolinate + acetyl-CoA + H2O = L-2-acetamido-6-oxoheptanedioate + CoA</text>
        <dbReference type="Rhea" id="RHEA:13085"/>
        <dbReference type="ChEBI" id="CHEBI:15377"/>
        <dbReference type="ChEBI" id="CHEBI:16845"/>
        <dbReference type="ChEBI" id="CHEBI:57287"/>
        <dbReference type="ChEBI" id="CHEBI:57288"/>
        <dbReference type="ChEBI" id="CHEBI:58117"/>
        <dbReference type="EC" id="2.3.1.89"/>
    </reaction>
</comment>
<comment type="pathway">
    <text evidence="1">Amino-acid biosynthesis; L-lysine biosynthesis via DAP pathway; LL-2,6-diaminopimelate from (S)-tetrahydrodipicolinate (acetylase route): step 1/3.</text>
</comment>
<comment type="similarity">
    <text evidence="1">Belongs to the transferase hexapeptide repeat family. DapH subfamily.</text>
</comment>
<gene>
    <name evidence="1" type="primary">dapH</name>
    <name type="ordered locus">SPG_2034</name>
</gene>
<dbReference type="EC" id="2.3.1.89" evidence="1"/>
<dbReference type="EMBL" id="CP001015">
    <property type="protein sequence ID" value="ACF55589.1"/>
    <property type="molecule type" value="Genomic_DNA"/>
</dbReference>
<dbReference type="SMR" id="B5E3A4"/>
<dbReference type="KEGG" id="spx:SPG_2034"/>
<dbReference type="HOGENOM" id="CLU_103751_0_0_9"/>
<dbReference type="UniPathway" id="UPA00034">
    <property type="reaction ID" value="UER00022"/>
</dbReference>
<dbReference type="GO" id="GO:0047200">
    <property type="term" value="F:tetrahydrodipicolinate N-acetyltransferase activity"/>
    <property type="evidence" value="ECO:0007669"/>
    <property type="project" value="UniProtKB-EC"/>
</dbReference>
<dbReference type="GO" id="GO:0019877">
    <property type="term" value="P:diaminopimelate biosynthetic process"/>
    <property type="evidence" value="ECO:0007669"/>
    <property type="project" value="UniProtKB-UniRule"/>
</dbReference>
<dbReference type="GO" id="GO:0009089">
    <property type="term" value="P:lysine biosynthetic process via diaminopimelate"/>
    <property type="evidence" value="ECO:0007669"/>
    <property type="project" value="UniProtKB-UniRule"/>
</dbReference>
<dbReference type="Gene3D" id="2.160.10.10">
    <property type="entry name" value="Hexapeptide repeat proteins"/>
    <property type="match status" value="1"/>
</dbReference>
<dbReference type="Gene3D" id="3.30.70.250">
    <property type="entry name" value="Malonyl-CoA ACP transacylase, ACP-binding"/>
    <property type="match status" value="1"/>
</dbReference>
<dbReference type="HAMAP" id="MF_01691">
    <property type="entry name" value="DapH"/>
    <property type="match status" value="1"/>
</dbReference>
<dbReference type="InterPro" id="IPR019873">
    <property type="entry name" value="DapH"/>
</dbReference>
<dbReference type="InterPro" id="IPR013710">
    <property type="entry name" value="DapH_N"/>
</dbReference>
<dbReference type="InterPro" id="IPR001451">
    <property type="entry name" value="Hexapep"/>
</dbReference>
<dbReference type="InterPro" id="IPR018357">
    <property type="entry name" value="Hexapep_transf_CS"/>
</dbReference>
<dbReference type="InterPro" id="IPR050179">
    <property type="entry name" value="Trans_hexapeptide_repeat"/>
</dbReference>
<dbReference type="InterPro" id="IPR011004">
    <property type="entry name" value="Trimer_LpxA-like_sf"/>
</dbReference>
<dbReference type="NCBIfam" id="TIGR03532">
    <property type="entry name" value="DapD_Ac"/>
    <property type="match status" value="1"/>
</dbReference>
<dbReference type="PANTHER" id="PTHR43300:SF10">
    <property type="entry name" value="2,3,4,5-TETRAHYDROPYRIDINE-2,6-DICARBOXYLATE N-ACETYLTRANSFERASE"/>
    <property type="match status" value="1"/>
</dbReference>
<dbReference type="PANTHER" id="PTHR43300">
    <property type="entry name" value="ACETYLTRANSFERASE"/>
    <property type="match status" value="1"/>
</dbReference>
<dbReference type="Pfam" id="PF08503">
    <property type="entry name" value="DapH_N"/>
    <property type="match status" value="1"/>
</dbReference>
<dbReference type="Pfam" id="PF00132">
    <property type="entry name" value="Hexapep"/>
    <property type="match status" value="1"/>
</dbReference>
<dbReference type="Pfam" id="PF14602">
    <property type="entry name" value="Hexapep_2"/>
    <property type="match status" value="2"/>
</dbReference>
<dbReference type="SUPFAM" id="SSF51161">
    <property type="entry name" value="Trimeric LpxA-like enzymes"/>
    <property type="match status" value="1"/>
</dbReference>
<dbReference type="PROSITE" id="PS00101">
    <property type="entry name" value="HEXAPEP_TRANSFERASES"/>
    <property type="match status" value="2"/>
</dbReference>
<organism>
    <name type="scientific">Streptococcus pneumoniae serotype 19F (strain G54)</name>
    <dbReference type="NCBI Taxonomy" id="512566"/>
    <lineage>
        <taxon>Bacteria</taxon>
        <taxon>Bacillati</taxon>
        <taxon>Bacillota</taxon>
        <taxon>Bacilli</taxon>
        <taxon>Lactobacillales</taxon>
        <taxon>Streptococcaceae</taxon>
        <taxon>Streptococcus</taxon>
    </lineage>
</organism>
<keyword id="KW-0012">Acyltransferase</keyword>
<keyword id="KW-0028">Amino-acid biosynthesis</keyword>
<keyword id="KW-0220">Diaminopimelate biosynthesis</keyword>
<keyword id="KW-0457">Lysine biosynthesis</keyword>
<keyword id="KW-0677">Repeat</keyword>
<keyword id="KW-0808">Transferase</keyword>
<feature type="chain" id="PRO_0000376713" description="2,3,4,5-tetrahydropyridine-2,6-dicarboxylate N-acetyltransferase">
    <location>
        <begin position="1"/>
        <end position="232"/>
    </location>
</feature>
<reference key="1">
    <citation type="journal article" date="2001" name="Microb. Drug Resist.">
        <title>Annotated draft genomic sequence from a Streptococcus pneumoniae type 19F clinical isolate.</title>
        <authorList>
            <person name="Dopazo J."/>
            <person name="Mendoza A."/>
            <person name="Herrero J."/>
            <person name="Caldara F."/>
            <person name="Humbert Y."/>
            <person name="Friedli L."/>
            <person name="Guerrier M."/>
            <person name="Grand-Schenk E."/>
            <person name="Gandin C."/>
            <person name="de Francesco M."/>
            <person name="Polissi A."/>
            <person name="Buell G."/>
            <person name="Feger G."/>
            <person name="Garcia E."/>
            <person name="Peitsch M."/>
            <person name="Garcia-Bustos J.F."/>
        </authorList>
    </citation>
    <scope>NUCLEOTIDE SEQUENCE [LARGE SCALE GENOMIC DNA]</scope>
    <source>
        <strain>G54</strain>
    </source>
</reference>
<reference key="2">
    <citation type="submission" date="2008-03" db="EMBL/GenBank/DDBJ databases">
        <title>Pneumococcal beta glucoside metabolism investigated by whole genome comparison.</title>
        <authorList>
            <person name="Mulas L."/>
            <person name="Trappetti C."/>
            <person name="Hakenbeck R."/>
            <person name="Iannelli F."/>
            <person name="Pozzi G."/>
            <person name="Davidsen T.M."/>
            <person name="Tettelin H."/>
            <person name="Oggioni M."/>
        </authorList>
    </citation>
    <scope>NUCLEOTIDE SEQUENCE [LARGE SCALE GENOMIC DNA]</scope>
    <source>
        <strain>G54</strain>
    </source>
</reference>
<sequence>MTATKMNAQEIIQFIANAEKKTSVKVTFEGQLATAVPSSVVKLGNVLFGDWKDVAPLLEGLVENQDYVVEQDARNSAVPLLDKRAINARIEPGAIIRDQVEIGDNAVIMMGAVINIGAEIGAGTMIDMGAILGGRAIVGKNSHVGAGAVLAGVIEPASAEPVRVGDNVLIGANAVVIEGVQIGSGSVVAAGAIVTQDVPENVVVAGVPARIIKEIDAQTQQKTALEDALRTL</sequence>
<accession>B5E3A4</accession>
<evidence type="ECO:0000255" key="1">
    <source>
        <dbReference type="HAMAP-Rule" id="MF_01691"/>
    </source>
</evidence>
<protein>
    <recommendedName>
        <fullName evidence="1">2,3,4,5-tetrahydropyridine-2,6-dicarboxylate N-acetyltransferase</fullName>
        <ecNumber evidence="1">2.3.1.89</ecNumber>
    </recommendedName>
    <alternativeName>
        <fullName evidence="1">Tetrahydrodipicolinate N-acetyltransferase</fullName>
        <shortName evidence="1">THP acetyltransferase</shortName>
        <shortName evidence="1">Tetrahydropicolinate acetylase</shortName>
    </alternativeName>
</protein>
<name>DAPH_STRP4</name>
<proteinExistence type="inferred from homology"/>